<reference key="1">
    <citation type="journal article" date="2003" name="J. Bacteriol.">
        <title>Propane monooxygenase and NAD+-dependent secondary alcohol dehydrogenase in propane metabolism by Gordonia sp. strain TY-5.</title>
        <authorList>
            <person name="Kotani T."/>
            <person name="Yamamoto T."/>
            <person name="Yurimoto H."/>
            <person name="Sakai Y."/>
            <person name="Kato N."/>
        </authorList>
    </citation>
    <scope>NUCLEOTIDE SEQUENCE [GENOMIC DNA]</scope>
    <scope>FUNCTION AS A PROPANE 2-MONOOXYGENASE</scope>
    <scope>CATALYTIC ACTIVITY</scope>
    <scope>INDUCTION BY PROPANE</scope>
    <scope>SUBUNIT</scope>
    <source>
        <strain evidence="10">TY-5</strain>
    </source>
</reference>
<reference key="2">
    <citation type="journal article" date="2011" name="Appl. Environ. Microbiol.">
        <title>Identification of the monooxygenase gene clusters responsible for the regioselective oxidation of phenol to hydroquinone in mycobacteria.</title>
        <authorList>
            <person name="Furuya T."/>
            <person name="Hirose S."/>
            <person name="Osanai H."/>
            <person name="Semba H."/>
            <person name="Kino K."/>
        </authorList>
    </citation>
    <scope>FUNCTION AS A PHENOL 4-MONOOXYGENASE</scope>
    <scope>CATALYTIC ACTIVITY</scope>
    <scope>INDUCTION BY ACETONE</scope>
    <source>
        <strain>TY-5</strain>
    </source>
</reference>
<reference key="3">
    <citation type="journal article" date="2013" name="FEBS J.">
        <title>The mycobacterial binuclear iron monooxygenases require a specific chaperonin-like protein for functional expression in a heterologous host.</title>
        <authorList>
            <person name="Furuya T."/>
            <person name="Hayashi M."/>
            <person name="Semba H."/>
            <person name="Kino K."/>
        </authorList>
    </citation>
    <scope>SUBUNIT</scope>
    <source>
        <strain>TY-5</strain>
    </source>
</reference>
<comment type="function">
    <text evidence="2 3">Component of the propane 2-monooxygenase multicomponent enzyme system which is involved in the degradation of propane via the O2-dependent hydroxylation of propane (PubMed:14645271). Under acetone induction, also able to catalyze the oxidation of phenol to yield hydroquinone (PubMed:21183637).</text>
</comment>
<comment type="catalytic activity">
    <reaction evidence="7">
        <text>propane + NADH + O2 + H(+) = propan-2-ol + NAD(+) + H2O</text>
        <dbReference type="Rhea" id="RHEA:49992"/>
        <dbReference type="ChEBI" id="CHEBI:15377"/>
        <dbReference type="ChEBI" id="CHEBI:15378"/>
        <dbReference type="ChEBI" id="CHEBI:15379"/>
        <dbReference type="ChEBI" id="CHEBI:17824"/>
        <dbReference type="ChEBI" id="CHEBI:32879"/>
        <dbReference type="ChEBI" id="CHEBI:57540"/>
        <dbReference type="ChEBI" id="CHEBI:57945"/>
        <dbReference type="EC" id="1.14.13.227"/>
    </reaction>
</comment>
<comment type="catalytic activity">
    <reaction evidence="8">
        <text>phenol + NADH + O2 + H(+) = hydroquinone + NAD(+) + H2O</text>
        <dbReference type="Rhea" id="RHEA:55796"/>
        <dbReference type="ChEBI" id="CHEBI:15377"/>
        <dbReference type="ChEBI" id="CHEBI:15378"/>
        <dbReference type="ChEBI" id="CHEBI:15379"/>
        <dbReference type="ChEBI" id="CHEBI:15882"/>
        <dbReference type="ChEBI" id="CHEBI:17594"/>
        <dbReference type="ChEBI" id="CHEBI:57540"/>
        <dbReference type="ChEBI" id="CHEBI:57945"/>
    </reaction>
</comment>
<comment type="cofactor">
    <cofactor evidence="1">
        <name>Fe(2+)</name>
        <dbReference type="ChEBI" id="CHEBI:29033"/>
    </cofactor>
    <text evidence="1">Binds 2 Fe(2+) ions per subunit.</text>
</comment>
<comment type="subunit">
    <text evidence="7 9">The propane 2-monooxygenase multicomponent enzyme system is composed of an electron transfer component and a monooxygenase component interacting with the effector protein PrmD. The electron transfer component is composed of a reductase (PrmB), and the monooxygenase component is formed by a large subunit (PrmA) and a small subunit (PrmC) (PubMed:14645271). Probably requires the presence of the chaperonin-like protein PrmG to ensure a productive folding, resulting of a soluble PrmA, which leads to the active form of PrmABCD (PubMed:23171424).</text>
</comment>
<comment type="induction">
    <text evidence="2 3">By propane and acetone.</text>
</comment>
<comment type="similarity">
    <text evidence="6">Belongs to the TmoA/XamoA family.</text>
</comment>
<dbReference type="EC" id="1.14.13.227" evidence="7"/>
<dbReference type="EMBL" id="AB112920">
    <property type="protein sequence ID" value="BAD03956.2"/>
    <property type="molecule type" value="Genomic_DNA"/>
</dbReference>
<dbReference type="SMR" id="Q768T5"/>
<dbReference type="BioCyc" id="MetaCyc:MONOMER-19810"/>
<dbReference type="BRENDA" id="1.14.13.227">
    <property type="organism ID" value="7737"/>
</dbReference>
<dbReference type="GO" id="GO:0046872">
    <property type="term" value="F:metal ion binding"/>
    <property type="evidence" value="ECO:0007669"/>
    <property type="project" value="UniProtKB-KW"/>
</dbReference>
<dbReference type="GO" id="GO:0004497">
    <property type="term" value="F:monooxygenase activity"/>
    <property type="evidence" value="ECO:0007669"/>
    <property type="project" value="UniProtKB-KW"/>
</dbReference>
<dbReference type="CDD" id="cd01057">
    <property type="entry name" value="AAMH_A"/>
    <property type="match status" value="1"/>
</dbReference>
<dbReference type="Gene3D" id="1.10.620.20">
    <property type="entry name" value="Ribonucleotide Reductase, subunit A"/>
    <property type="match status" value="1"/>
</dbReference>
<dbReference type="InterPro" id="IPR009078">
    <property type="entry name" value="Ferritin-like_SF"/>
</dbReference>
<dbReference type="InterPro" id="IPR003430">
    <property type="entry name" value="Phenol_Hydrox"/>
</dbReference>
<dbReference type="InterPro" id="IPR012348">
    <property type="entry name" value="RNR-like"/>
</dbReference>
<dbReference type="Pfam" id="PF02332">
    <property type="entry name" value="Phenol_Hydrox"/>
    <property type="match status" value="1"/>
</dbReference>
<dbReference type="SUPFAM" id="SSF47240">
    <property type="entry name" value="Ferritin-like"/>
    <property type="match status" value="1"/>
</dbReference>
<accession>Q768T5</accession>
<evidence type="ECO:0000250" key="1">
    <source>
        <dbReference type="UniProtKB" id="Q00456"/>
    </source>
</evidence>
<evidence type="ECO:0000269" key="2">
    <source>
    </source>
</evidence>
<evidence type="ECO:0000269" key="3">
    <source>
    </source>
</evidence>
<evidence type="ECO:0000303" key="4">
    <source>
    </source>
</evidence>
<evidence type="ECO:0000303" key="5">
    <source>
    </source>
</evidence>
<evidence type="ECO:0000305" key="6"/>
<evidence type="ECO:0000305" key="7">
    <source>
    </source>
</evidence>
<evidence type="ECO:0000305" key="8">
    <source>
    </source>
</evidence>
<evidence type="ECO:0000305" key="9">
    <source>
    </source>
</evidence>
<evidence type="ECO:0000312" key="10">
    <source>
        <dbReference type="EMBL" id="BAD03956.2"/>
    </source>
</evidence>
<organism>
    <name type="scientific">Gordonia sp. (strain TY-5)</name>
    <dbReference type="NCBI Taxonomy" id="235467"/>
    <lineage>
        <taxon>Bacteria</taxon>
        <taxon>Bacillati</taxon>
        <taxon>Actinomycetota</taxon>
        <taxon>Actinomycetes</taxon>
        <taxon>Mycobacteriales</taxon>
        <taxon>Gordoniaceae</taxon>
        <taxon>Gordonia</taxon>
    </lineage>
</organism>
<name>PRMA_GORST</name>
<gene>
    <name evidence="4" type="primary">prmA</name>
</gene>
<keyword id="KW-0408">Iron</keyword>
<keyword id="KW-0479">Metal-binding</keyword>
<keyword id="KW-0503">Monooxygenase</keyword>
<keyword id="KW-0520">NAD</keyword>
<keyword id="KW-0560">Oxidoreductase</keyword>
<protein>
    <recommendedName>
        <fullName evidence="4">Propane 2-monooxygenase, hydroxylase component large subunit</fullName>
        <shortName evidence="4">Prm</shortName>
        <ecNumber evidence="7">1.14.13.227</ecNumber>
    </recommendedName>
    <alternativeName>
        <fullName evidence="5">Phenol 4-monooxygenase</fullName>
    </alternativeName>
</protein>
<proteinExistence type="evidence at protein level"/>
<sequence>MSRQSLTKAHAKITELSWEPTFATPATRFGTDYTFEKAPKKDPLKQIMRSYFPMEEEKDNRVYGAMDGAIRGNMFRQVQERWLEWQKLFLSIIPFPEISAARAMPMAIDAVPNPEIHNGLAVQMIDEVRHSTIQMNLKKLYMNNYIDPAGFDITEKAFANNYAGTIGRQFGEGFITGDAITAANIYLTVVAETAFTNTLFVAMPDEAAANGDYLLPTVFHSVQSDESRHISNGYSILLMALADERNRPLLERDLRYAWWNNHCVVDAAIGTFIEYGTKDRRKDRESYAEMWRRWIYDDYYRSYLLPLEKYGLTIPHDLVEEAWNRIVDKHYVHEVARFFATGWPVNYWRIDAMTDTDFEWFEEKYPGWYNKFGKWWENYNRLAYPGKNKPIAFEDVDYEYPHRCWTCMVPCLIREDMVTDKVDGQWRTYCSETCAWTDKVAFRPEYEGRPTPNMGRLTGFREWETLHHGKDLADIITDLGYVRDDGKTLIPQPHLDLDPKKMWTLDDVRGIPFGSPNVALNEMSDDEREAHIAAYMANKNGAVTV</sequence>
<feature type="chain" id="PRO_0000442962" description="Propane 2-monooxygenase, hydroxylase component large subunit">
    <location>
        <begin position="1"/>
        <end position="545"/>
    </location>
</feature>
<feature type="binding site" evidence="1">
    <location>
        <position position="97"/>
    </location>
    <ligand>
        <name>Fe cation</name>
        <dbReference type="ChEBI" id="CHEBI:24875"/>
        <label>1</label>
        <note>catalytic</note>
    </ligand>
</feature>
<feature type="binding site" evidence="1">
    <location>
        <position position="127"/>
    </location>
    <ligand>
        <name>Fe cation</name>
        <dbReference type="ChEBI" id="CHEBI:24875"/>
        <label>1</label>
        <note>catalytic</note>
    </ligand>
</feature>
<feature type="binding site" evidence="1">
    <location>
        <position position="127"/>
    </location>
    <ligand>
        <name>Fe cation</name>
        <dbReference type="ChEBI" id="CHEBI:24875"/>
        <label>2</label>
        <note>catalytic</note>
    </ligand>
</feature>
<feature type="binding site" evidence="1">
    <location>
        <position position="130"/>
    </location>
    <ligand>
        <name>Fe cation</name>
        <dbReference type="ChEBI" id="CHEBI:24875"/>
        <label>1</label>
        <note>catalytic</note>
    </ligand>
</feature>
<feature type="binding site" evidence="1">
    <location>
        <position position="192"/>
    </location>
    <ligand>
        <name>Fe cation</name>
        <dbReference type="ChEBI" id="CHEBI:24875"/>
        <label>2</label>
        <note>catalytic</note>
    </ligand>
</feature>
<feature type="binding site" evidence="1">
    <location>
        <position position="226"/>
    </location>
    <ligand>
        <name>Fe cation</name>
        <dbReference type="ChEBI" id="CHEBI:24875"/>
        <label>1</label>
        <note>catalytic</note>
    </ligand>
</feature>
<feature type="binding site" evidence="1">
    <location>
        <position position="226"/>
    </location>
    <ligand>
        <name>Fe cation</name>
        <dbReference type="ChEBI" id="CHEBI:24875"/>
        <label>2</label>
        <note>catalytic</note>
    </ligand>
</feature>
<feature type="binding site" evidence="1">
    <location>
        <position position="229"/>
    </location>
    <ligand>
        <name>Fe cation</name>
        <dbReference type="ChEBI" id="CHEBI:24875"/>
        <label>2</label>
        <note>catalytic</note>
    </ligand>
</feature>